<comment type="function">
    <text evidence="1">RNA chaperone that binds small regulatory RNA (sRNAs) and mRNAs to facilitate mRNA translational regulation in response to envelope stress, environmental stress and changes in metabolite concentrations. Also binds with high specificity to tRNAs.</text>
</comment>
<comment type="subunit">
    <text evidence="1">Homohexamer.</text>
</comment>
<comment type="similarity">
    <text evidence="1">Belongs to the Hfq family.</text>
</comment>
<accession>A0K7T1</accession>
<reference key="1">
    <citation type="submission" date="2006-08" db="EMBL/GenBank/DDBJ databases">
        <title>Complete sequence of chromosome 1 of Burkholderia cenocepacia HI2424.</title>
        <authorList>
            <person name="Copeland A."/>
            <person name="Lucas S."/>
            <person name="Lapidus A."/>
            <person name="Barry K."/>
            <person name="Detter J.C."/>
            <person name="Glavina del Rio T."/>
            <person name="Hammon N."/>
            <person name="Israni S."/>
            <person name="Pitluck S."/>
            <person name="Chain P."/>
            <person name="Malfatti S."/>
            <person name="Shin M."/>
            <person name="Vergez L."/>
            <person name="Schmutz J."/>
            <person name="Larimer F."/>
            <person name="Land M."/>
            <person name="Hauser L."/>
            <person name="Kyrpides N."/>
            <person name="Kim E."/>
            <person name="LiPuma J.J."/>
            <person name="Gonzalez C.F."/>
            <person name="Konstantinidis K."/>
            <person name="Tiedje J.M."/>
            <person name="Richardson P."/>
        </authorList>
    </citation>
    <scope>NUCLEOTIDE SEQUENCE [LARGE SCALE GENOMIC DNA]</scope>
    <source>
        <strain>HI2424</strain>
    </source>
</reference>
<sequence>MSNKGQLLQDPFLNALRKEHVPVSIYLVNGIKLQGNIESFDQYVVLLRNTVTQMVYKHAISTVVPARPVNFHPDAEASS</sequence>
<gene>
    <name evidence="1" type="primary">hfq</name>
    <name type="ordered locus">Bcen2424_1807</name>
</gene>
<evidence type="ECO:0000255" key="1">
    <source>
        <dbReference type="HAMAP-Rule" id="MF_00436"/>
    </source>
</evidence>
<evidence type="ECO:0000255" key="2">
    <source>
        <dbReference type="PROSITE-ProRule" id="PRU01346"/>
    </source>
</evidence>
<organism>
    <name type="scientific">Burkholderia cenocepacia (strain HI2424)</name>
    <dbReference type="NCBI Taxonomy" id="331272"/>
    <lineage>
        <taxon>Bacteria</taxon>
        <taxon>Pseudomonadati</taxon>
        <taxon>Pseudomonadota</taxon>
        <taxon>Betaproteobacteria</taxon>
        <taxon>Burkholderiales</taxon>
        <taxon>Burkholderiaceae</taxon>
        <taxon>Burkholderia</taxon>
        <taxon>Burkholderia cepacia complex</taxon>
    </lineage>
</organism>
<feature type="chain" id="PRO_1000025892" description="RNA-binding protein Hfq">
    <location>
        <begin position="1"/>
        <end position="79"/>
    </location>
</feature>
<feature type="domain" description="Sm" evidence="2">
    <location>
        <begin position="10"/>
        <end position="69"/>
    </location>
</feature>
<dbReference type="EMBL" id="CP000458">
    <property type="protein sequence ID" value="ABK08558.1"/>
    <property type="molecule type" value="Genomic_DNA"/>
</dbReference>
<dbReference type="RefSeq" id="WP_006399927.1">
    <property type="nucleotide sequence ID" value="NC_008542.1"/>
</dbReference>
<dbReference type="SMR" id="A0K7T1"/>
<dbReference type="GeneID" id="98105673"/>
<dbReference type="KEGG" id="bch:Bcen2424_1807"/>
<dbReference type="HOGENOM" id="CLU_113688_2_2_4"/>
<dbReference type="GO" id="GO:0005829">
    <property type="term" value="C:cytosol"/>
    <property type="evidence" value="ECO:0007669"/>
    <property type="project" value="TreeGrafter"/>
</dbReference>
<dbReference type="GO" id="GO:0003723">
    <property type="term" value="F:RNA binding"/>
    <property type="evidence" value="ECO:0007669"/>
    <property type="project" value="UniProtKB-UniRule"/>
</dbReference>
<dbReference type="GO" id="GO:0006355">
    <property type="term" value="P:regulation of DNA-templated transcription"/>
    <property type="evidence" value="ECO:0007669"/>
    <property type="project" value="InterPro"/>
</dbReference>
<dbReference type="GO" id="GO:0043487">
    <property type="term" value="P:regulation of RNA stability"/>
    <property type="evidence" value="ECO:0007669"/>
    <property type="project" value="TreeGrafter"/>
</dbReference>
<dbReference type="GO" id="GO:0045974">
    <property type="term" value="P:regulation of translation, ncRNA-mediated"/>
    <property type="evidence" value="ECO:0007669"/>
    <property type="project" value="TreeGrafter"/>
</dbReference>
<dbReference type="CDD" id="cd01716">
    <property type="entry name" value="Hfq"/>
    <property type="match status" value="1"/>
</dbReference>
<dbReference type="FunFam" id="2.30.30.100:FF:000001">
    <property type="entry name" value="RNA-binding protein Hfq"/>
    <property type="match status" value="1"/>
</dbReference>
<dbReference type="Gene3D" id="2.30.30.100">
    <property type="match status" value="1"/>
</dbReference>
<dbReference type="HAMAP" id="MF_00436">
    <property type="entry name" value="Hfq"/>
    <property type="match status" value="1"/>
</dbReference>
<dbReference type="InterPro" id="IPR005001">
    <property type="entry name" value="Hfq"/>
</dbReference>
<dbReference type="InterPro" id="IPR010920">
    <property type="entry name" value="LSM_dom_sf"/>
</dbReference>
<dbReference type="InterPro" id="IPR047575">
    <property type="entry name" value="Sm"/>
</dbReference>
<dbReference type="NCBIfam" id="TIGR02383">
    <property type="entry name" value="Hfq"/>
    <property type="match status" value="1"/>
</dbReference>
<dbReference type="NCBIfam" id="NF001602">
    <property type="entry name" value="PRK00395.1"/>
    <property type="match status" value="1"/>
</dbReference>
<dbReference type="PANTHER" id="PTHR34772">
    <property type="entry name" value="RNA-BINDING PROTEIN HFQ"/>
    <property type="match status" value="1"/>
</dbReference>
<dbReference type="PANTHER" id="PTHR34772:SF1">
    <property type="entry name" value="RNA-BINDING PROTEIN HFQ"/>
    <property type="match status" value="1"/>
</dbReference>
<dbReference type="Pfam" id="PF17209">
    <property type="entry name" value="Hfq"/>
    <property type="match status" value="1"/>
</dbReference>
<dbReference type="SUPFAM" id="SSF50182">
    <property type="entry name" value="Sm-like ribonucleoproteins"/>
    <property type="match status" value="1"/>
</dbReference>
<dbReference type="PROSITE" id="PS52002">
    <property type="entry name" value="SM"/>
    <property type="match status" value="1"/>
</dbReference>
<proteinExistence type="inferred from homology"/>
<protein>
    <recommendedName>
        <fullName evidence="1">RNA-binding protein Hfq</fullName>
    </recommendedName>
</protein>
<keyword id="KW-0694">RNA-binding</keyword>
<keyword id="KW-0346">Stress response</keyword>
<name>HFQ_BURCH</name>